<evidence type="ECO:0000250" key="1">
    <source>
        <dbReference type="UniProtKB" id="Q5TDH0"/>
    </source>
</evidence>
<evidence type="ECO:0000255" key="2">
    <source>
        <dbReference type="PROSITE-ProRule" id="PRU00214"/>
    </source>
</evidence>
<evidence type="ECO:0000256" key="3">
    <source>
        <dbReference type="SAM" id="MobiDB-lite"/>
    </source>
</evidence>
<evidence type="ECO:0000305" key="4"/>
<dbReference type="EC" id="3.4.23.-" evidence="1"/>
<dbReference type="EMBL" id="BC100609">
    <property type="protein sequence ID" value="AAI00610.1"/>
    <property type="molecule type" value="mRNA"/>
</dbReference>
<dbReference type="RefSeq" id="NP_001029120.1">
    <property type="nucleotide sequence ID" value="NM_001033948.1"/>
</dbReference>
<dbReference type="SMR" id="Q497D6"/>
<dbReference type="FunCoup" id="Q497D6">
    <property type="interactions" value="2066"/>
</dbReference>
<dbReference type="STRING" id="8364.ENSXETP00000002353"/>
<dbReference type="MEROPS" id="A28.003"/>
<dbReference type="PaxDb" id="8364-ENSXETP00000029458"/>
<dbReference type="DNASU" id="619368"/>
<dbReference type="GeneID" id="619368"/>
<dbReference type="KEGG" id="xtr:619368"/>
<dbReference type="AGR" id="Xenbase:XB-GENE-6073016"/>
<dbReference type="CTD" id="84301"/>
<dbReference type="Xenbase" id="XB-GENE-6073016">
    <property type="gene designation" value="ddi2"/>
</dbReference>
<dbReference type="eggNOG" id="KOG0012">
    <property type="taxonomic scope" value="Eukaryota"/>
</dbReference>
<dbReference type="InParanoid" id="Q497D6"/>
<dbReference type="OrthoDB" id="1047367at2759"/>
<dbReference type="Proteomes" id="UP000008143">
    <property type="component" value="Chromosome 7"/>
</dbReference>
<dbReference type="Bgee" id="ENSXETG00000013448">
    <property type="expression patterns" value="Expressed in neurula embryo and 12 other cell types or tissues"/>
</dbReference>
<dbReference type="GO" id="GO:0005694">
    <property type="term" value="C:chromosome"/>
    <property type="evidence" value="ECO:0007669"/>
    <property type="project" value="UniProtKB-SubCell"/>
</dbReference>
<dbReference type="GO" id="GO:0005829">
    <property type="term" value="C:cytosol"/>
    <property type="evidence" value="ECO:0007669"/>
    <property type="project" value="UniProtKB-SubCell"/>
</dbReference>
<dbReference type="GO" id="GO:0004190">
    <property type="term" value="F:aspartic-type endopeptidase activity"/>
    <property type="evidence" value="ECO:0000250"/>
    <property type="project" value="UniProtKB"/>
</dbReference>
<dbReference type="GO" id="GO:0042802">
    <property type="term" value="F:identical protein binding"/>
    <property type="evidence" value="ECO:0000250"/>
    <property type="project" value="UniProtKB"/>
</dbReference>
<dbReference type="GO" id="GO:0072711">
    <property type="term" value="P:cellular response to hydroxyurea"/>
    <property type="evidence" value="ECO:0000250"/>
    <property type="project" value="UniProtKB"/>
</dbReference>
<dbReference type="GO" id="GO:0010498">
    <property type="term" value="P:proteasomal protein catabolic process"/>
    <property type="evidence" value="ECO:0000250"/>
    <property type="project" value="UniProtKB"/>
</dbReference>
<dbReference type="GO" id="GO:0016485">
    <property type="term" value="P:protein processing"/>
    <property type="evidence" value="ECO:0000250"/>
    <property type="project" value="UniProtKB"/>
</dbReference>
<dbReference type="GO" id="GO:0097752">
    <property type="term" value="P:regulation of DNA stability"/>
    <property type="evidence" value="ECO:0000250"/>
    <property type="project" value="UniProtKB"/>
</dbReference>
<dbReference type="GO" id="GO:0031647">
    <property type="term" value="P:regulation of protein stability"/>
    <property type="evidence" value="ECO:0000250"/>
    <property type="project" value="UniProtKB"/>
</dbReference>
<dbReference type="CDD" id="cd05479">
    <property type="entry name" value="RP_DDI"/>
    <property type="match status" value="1"/>
</dbReference>
<dbReference type="CDD" id="cd01796">
    <property type="entry name" value="Ubl_Ddi1_like"/>
    <property type="match status" value="1"/>
</dbReference>
<dbReference type="FunFam" id="2.40.70.10:FF:000005">
    <property type="entry name" value="DNA damage inducible 1 homolog 2"/>
    <property type="match status" value="1"/>
</dbReference>
<dbReference type="FunFam" id="3.10.20.90:FF:000107">
    <property type="entry name" value="protein DDI1 homolog 2 isoform X1"/>
    <property type="match status" value="1"/>
</dbReference>
<dbReference type="Gene3D" id="2.40.70.10">
    <property type="entry name" value="Acid Proteases"/>
    <property type="match status" value="1"/>
</dbReference>
<dbReference type="Gene3D" id="3.10.20.90">
    <property type="entry name" value="Phosphatidylinositol 3-kinase Catalytic Subunit, Chain A, domain 1"/>
    <property type="match status" value="1"/>
</dbReference>
<dbReference type="InterPro" id="IPR033882">
    <property type="entry name" value="DDI1_N"/>
</dbReference>
<dbReference type="InterPro" id="IPR019103">
    <property type="entry name" value="Peptidase_aspartic_DDI1-type"/>
</dbReference>
<dbReference type="InterPro" id="IPR021109">
    <property type="entry name" value="Peptidase_aspartic_dom_sf"/>
</dbReference>
<dbReference type="InterPro" id="IPR000626">
    <property type="entry name" value="Ubiquitin-like_dom"/>
</dbReference>
<dbReference type="InterPro" id="IPR029071">
    <property type="entry name" value="Ubiquitin-like_domsf"/>
</dbReference>
<dbReference type="PANTHER" id="PTHR15397:SF3">
    <property type="entry name" value="DNA DAMAGE INDUCIBLE 1 HOMOLOG 2"/>
    <property type="match status" value="1"/>
</dbReference>
<dbReference type="PANTHER" id="PTHR15397">
    <property type="entry name" value="SODIUM-GLUCOSE COTRANSPORTER REGULATORY PROTEIN -RELATED"/>
    <property type="match status" value="1"/>
</dbReference>
<dbReference type="Pfam" id="PF09668">
    <property type="entry name" value="Asp_protease"/>
    <property type="match status" value="1"/>
</dbReference>
<dbReference type="Pfam" id="PF24669">
    <property type="entry name" value="Ddi2_HDD"/>
    <property type="match status" value="1"/>
</dbReference>
<dbReference type="Pfam" id="PF00240">
    <property type="entry name" value="ubiquitin"/>
    <property type="match status" value="1"/>
</dbReference>
<dbReference type="SUPFAM" id="SSF50630">
    <property type="entry name" value="Acid proteases"/>
    <property type="match status" value="1"/>
</dbReference>
<dbReference type="SUPFAM" id="SSF54236">
    <property type="entry name" value="Ubiquitin-like"/>
    <property type="match status" value="1"/>
</dbReference>
<dbReference type="PROSITE" id="PS50053">
    <property type="entry name" value="UBIQUITIN_2"/>
    <property type="match status" value="1"/>
</dbReference>
<accession>Q497D6</accession>
<organism>
    <name type="scientific">Xenopus tropicalis</name>
    <name type="common">Western clawed frog</name>
    <name type="synonym">Silurana tropicalis</name>
    <dbReference type="NCBI Taxonomy" id="8364"/>
    <lineage>
        <taxon>Eukaryota</taxon>
        <taxon>Metazoa</taxon>
        <taxon>Chordata</taxon>
        <taxon>Craniata</taxon>
        <taxon>Vertebrata</taxon>
        <taxon>Euteleostomi</taxon>
        <taxon>Amphibia</taxon>
        <taxon>Batrachia</taxon>
        <taxon>Anura</taxon>
        <taxon>Pipoidea</taxon>
        <taxon>Pipidae</taxon>
        <taxon>Xenopodinae</taxon>
        <taxon>Xenopus</taxon>
        <taxon>Silurana</taxon>
    </lineage>
</organism>
<sequence length="394" mass="43898">MLITVYCVRRDLSEVTFSLEVDGDFELENFRALCELESGIPASETLIVYAERPLTNNQRSLASYGLKDGDVVILRQRETPEARPAAPFPGLDFSTIAVPGSSSQPAPSQPQAPPPPPPDTSSFPQGLDNPALLREMLLANPHELSLLKERNPPLAEALLSGDLEKFTKVLLEQQQERARREQERIRLYSADPFDLEAQAKIEEDIRQQNIEENMTIAMEEAPESFGQVVMLYINCKVNGYPVKAFVDSGAQMTIMSQACAERCHIMRLVDRRWAGIAKGVGTQKIIGRVHLAQVQIEGDFLPCSFSILEEQPMDMLLGLDMLKRHQCSIDLEKNVLVIGTTGTRTSFLPEGELPECARLAYGPGREEVRPEEIADRELAEVLQKSAEEADQQKP</sequence>
<protein>
    <recommendedName>
        <fullName evidence="4">Protein DDI1 homolog 2</fullName>
        <ecNumber evidence="1">3.4.23.-</ecNumber>
    </recommendedName>
</protein>
<keyword id="KW-0064">Aspartyl protease</keyword>
<keyword id="KW-0158">Chromosome</keyword>
<keyword id="KW-0963">Cytoplasm</keyword>
<keyword id="KW-0378">Hydrolase</keyword>
<keyword id="KW-0645">Protease</keyword>
<keyword id="KW-1185">Reference proteome</keyword>
<name>DDI2_XENTR</name>
<comment type="function">
    <text evidence="1">Aspartic protease that mediates the cleavage of NFE2L1/NRF1 at 'Leu-104', thereby promoting release of NFE2L1/NRF1 from the endoplasmic reticulum membrane. Ubiquitination of NFE2L1/NRF1 is a prerequisite for cleavage, suggesting that DDI2 specifically recognizes and binds ubiquitinated NFE2L1/NRF1. Seems to act as a proteasomal shuttle which links the proteasome and replication fork proteins like RTF2. Required for cellular survival following replication stress.</text>
</comment>
<comment type="subunit">
    <text evidence="1">Homodimer.</text>
</comment>
<comment type="subcellular location">
    <subcellularLocation>
        <location evidence="1">Cytoplasm</location>
        <location evidence="1">Cytosol</location>
    </subcellularLocation>
    <subcellularLocation>
        <location evidence="1">Chromosome</location>
    </subcellularLocation>
</comment>
<comment type="similarity">
    <text evidence="4">Belongs to the DDI1 family.</text>
</comment>
<comment type="caution">
    <text evidence="1">Although this protein contains the conserved Asp-247 that functions as an active site, this protein does not have proteolytic activity, and may therefore be catalytically inactive.</text>
</comment>
<reference key="1">
    <citation type="submission" date="2005-08" db="EMBL/GenBank/DDBJ databases">
        <authorList>
            <consortium name="NIH - Xenopus Gene Collection (XGC) project"/>
        </authorList>
    </citation>
    <scope>NUCLEOTIDE SEQUENCE [LARGE SCALE MRNA]</scope>
    <source>
        <tissue>Embryo</tissue>
    </source>
</reference>
<feature type="chain" id="PRO_0000287094" description="Protein DDI1 homolog 2">
    <location>
        <begin position="1"/>
        <end position="394"/>
    </location>
</feature>
<feature type="domain" description="Ubiquitin-like" evidence="2">
    <location>
        <begin position="1"/>
        <end position="81"/>
    </location>
</feature>
<feature type="region of interest" description="Disordered" evidence="3">
    <location>
        <begin position="82"/>
        <end position="128"/>
    </location>
</feature>
<feature type="short sequence motif" description="Ubiquitin-binding" evidence="4">
    <location>
        <begin position="371"/>
        <end position="390"/>
    </location>
</feature>
<feature type="compositionally biased region" description="Pro residues" evidence="3">
    <location>
        <begin position="107"/>
        <end position="119"/>
    </location>
</feature>
<feature type="active site" evidence="4">
    <location>
        <position position="247"/>
    </location>
</feature>
<proteinExistence type="evidence at transcript level"/>
<gene>
    <name type="primary">ddi2</name>
</gene>